<sequence length="361" mass="41526">MSKQQPTQFINPETPGYVGFANLPNQVHRKSVKKGFEFTLMVVGESGLGKSTLINSLFLTDLYPERIIPGAAEKIERTVQIEASTVEIEERGVKLRLTVVDTPGYGDAINCRDCFKTIISYIDEQFERYLHDESGLNRRHIIDNRVHCCFYFISPFGHGLKPLDVAFMKAIHNKVNIVPVIAKADTLTLKERERLKKRILDEIEEHSIKIYHLPDAESDEDEDFKEQTRLLKASIPFSVVGSNQLIEAKGKKVRGRLYPWGVVEVENPEHNDFLKLRTMLITHMQDLQEVTQDLHYENFRSERLKRGGRKVENEDMNKDQILLEKEAELRRMQEMIARMQAQMQMQMQGGDSDSGALGQHV</sequence>
<keyword id="KW-0002">3D-structure</keyword>
<keyword id="KW-0007">Acetylation</keyword>
<keyword id="KW-0131">Cell cycle</keyword>
<keyword id="KW-0132">Cell division</keyword>
<keyword id="KW-1003">Cell membrane</keyword>
<keyword id="KW-0966">Cell projection</keyword>
<keyword id="KW-0137">Centromere</keyword>
<keyword id="KW-0158">Chromosome</keyword>
<keyword id="KW-0969">Cilium</keyword>
<keyword id="KW-0963">Cytoplasm</keyword>
<keyword id="KW-0206">Cytoskeleton</keyword>
<keyword id="KW-0221">Differentiation</keyword>
<keyword id="KW-0903">Direct protein sequencing</keyword>
<keyword id="KW-0282">Flagellum</keyword>
<keyword id="KW-0342">GTP-binding</keyword>
<keyword id="KW-0995">Kinetochore</keyword>
<keyword id="KW-0472">Membrane</keyword>
<keyword id="KW-0498">Mitosis</keyword>
<keyword id="KW-0547">Nucleotide-binding</keyword>
<keyword id="KW-0597">Phosphoprotein</keyword>
<keyword id="KW-1185">Reference proteome</keyword>
<keyword id="KW-0744">Spermatogenesis</keyword>
<protein>
    <recommendedName>
        <fullName>Septin-2</fullName>
    </recommendedName>
    <alternativeName>
        <fullName>Neural precursor cell expressed developmentally down-regulated protein 5</fullName>
        <shortName>NEDD-5</shortName>
    </alternativeName>
</protein>
<evidence type="ECO:0000250" key="1"/>
<evidence type="ECO:0000250" key="2">
    <source>
        <dbReference type="UniProtKB" id="Q15019"/>
    </source>
</evidence>
<evidence type="ECO:0000255" key="3">
    <source>
        <dbReference type="PROSITE-ProRule" id="PRU01056"/>
    </source>
</evidence>
<evidence type="ECO:0000269" key="4">
    <source>
    </source>
</evidence>
<evidence type="ECO:0000269" key="5">
    <source>
    </source>
</evidence>
<evidence type="ECO:0000269" key="6">
    <source>
    </source>
</evidence>
<evidence type="ECO:0000269" key="7">
    <source>
    </source>
</evidence>
<evidence type="ECO:0000269" key="8">
    <source>
    </source>
</evidence>
<evidence type="ECO:0000303" key="9">
    <source>
    </source>
</evidence>
<evidence type="ECO:0000312" key="10">
    <source>
        <dbReference type="MGI" id="MGI:97298"/>
    </source>
</evidence>
<evidence type="ECO:0007744" key="11">
    <source>
    </source>
</evidence>
<evidence type="ECO:0007744" key="12">
    <source>
    </source>
</evidence>
<evidence type="ECO:0007744" key="13">
    <source>
    </source>
</evidence>
<evidence type="ECO:0007744" key="14">
    <source>
    </source>
</evidence>
<evidence type="ECO:0007744" key="15">
    <source>
    </source>
</evidence>
<evidence type="ECO:0007744" key="16">
    <source>
    </source>
</evidence>
<evidence type="ECO:0007744" key="17">
    <source>
    </source>
</evidence>
<evidence type="ECO:0007829" key="18">
    <source>
        <dbReference type="PDB" id="3FTQ"/>
    </source>
</evidence>
<dbReference type="EMBL" id="D49382">
    <property type="protein sequence ID" value="BAA08380.1"/>
    <property type="molecule type" value="mRNA"/>
</dbReference>
<dbReference type="EMBL" id="AK028072">
    <property type="protein sequence ID" value="BAC25737.1"/>
    <property type="molecule type" value="mRNA"/>
</dbReference>
<dbReference type="EMBL" id="AK146616">
    <property type="protein sequence ID" value="BAE27305.1"/>
    <property type="molecule type" value="mRNA"/>
</dbReference>
<dbReference type="EMBL" id="AK151591">
    <property type="protein sequence ID" value="BAE30531.1"/>
    <property type="molecule type" value="mRNA"/>
</dbReference>
<dbReference type="EMBL" id="AK171331">
    <property type="protein sequence ID" value="BAE42396.1"/>
    <property type="molecule type" value="mRNA"/>
</dbReference>
<dbReference type="EMBL" id="CH466520">
    <property type="protein sequence ID" value="EDL39946.1"/>
    <property type="molecule type" value="Genomic_DNA"/>
</dbReference>
<dbReference type="EMBL" id="CH466520">
    <property type="protein sequence ID" value="EDL39948.1"/>
    <property type="molecule type" value="Genomic_DNA"/>
</dbReference>
<dbReference type="EMBL" id="BC138636">
    <property type="protein sequence ID" value="AAI38637.1"/>
    <property type="molecule type" value="mRNA"/>
</dbReference>
<dbReference type="EMBL" id="BC138637">
    <property type="protein sequence ID" value="AAI38638.1"/>
    <property type="molecule type" value="mRNA"/>
</dbReference>
<dbReference type="CCDS" id="CCDS15190.1"/>
<dbReference type="RefSeq" id="NP_001153189.1">
    <property type="nucleotide sequence ID" value="NM_001159717.1"/>
</dbReference>
<dbReference type="RefSeq" id="NP_001153190.1">
    <property type="nucleotide sequence ID" value="NM_001159718.1"/>
</dbReference>
<dbReference type="RefSeq" id="NP_001153191.1">
    <property type="nucleotide sequence ID" value="NM_001159719.2"/>
</dbReference>
<dbReference type="RefSeq" id="NP_001408423.1">
    <property type="nucleotide sequence ID" value="NM_001421494.1"/>
</dbReference>
<dbReference type="RefSeq" id="NP_001408424.1">
    <property type="nucleotide sequence ID" value="NM_001421495.1"/>
</dbReference>
<dbReference type="RefSeq" id="NP_001408425.1">
    <property type="nucleotide sequence ID" value="NM_001421496.1"/>
</dbReference>
<dbReference type="RefSeq" id="NP_001408426.1">
    <property type="nucleotide sequence ID" value="NM_001421497.1"/>
</dbReference>
<dbReference type="RefSeq" id="NP_001408427.1">
    <property type="nucleotide sequence ID" value="NM_001421498.1"/>
</dbReference>
<dbReference type="RefSeq" id="NP_001408428.1">
    <property type="nucleotide sequence ID" value="NM_001421499.1"/>
</dbReference>
<dbReference type="RefSeq" id="NP_035021.1">
    <property type="nucleotide sequence ID" value="NM_010891.2"/>
</dbReference>
<dbReference type="RefSeq" id="XP_006529304.1">
    <property type="nucleotide sequence ID" value="XM_006529241.2"/>
</dbReference>
<dbReference type="RefSeq" id="XP_006529305.1">
    <property type="nucleotide sequence ID" value="XM_006529242.1"/>
</dbReference>
<dbReference type="PDB" id="3FTQ">
    <property type="method" value="X-ray"/>
    <property type="resolution" value="2.90 A"/>
    <property type="chains" value="A/B/C/D=33-306"/>
</dbReference>
<dbReference type="PDBsum" id="3FTQ"/>
<dbReference type="SMR" id="P42208"/>
<dbReference type="BioGRID" id="201724">
    <property type="interactions" value="35"/>
</dbReference>
<dbReference type="DIP" id="DIP-32438N"/>
<dbReference type="FunCoup" id="P42208">
    <property type="interactions" value="3170"/>
</dbReference>
<dbReference type="IntAct" id="P42208">
    <property type="interactions" value="21"/>
</dbReference>
<dbReference type="MINT" id="P42208"/>
<dbReference type="STRING" id="10090.ENSMUSP00000027495"/>
<dbReference type="GlyGen" id="P42208">
    <property type="glycosylation" value="1 site, 1 O-linked glycan (1 site)"/>
</dbReference>
<dbReference type="iPTMnet" id="P42208"/>
<dbReference type="PhosphoSitePlus" id="P42208"/>
<dbReference type="SwissPalm" id="P42208"/>
<dbReference type="REPRODUCTION-2DPAGE" id="IPI00114945"/>
<dbReference type="REPRODUCTION-2DPAGE" id="P42208"/>
<dbReference type="jPOST" id="P42208"/>
<dbReference type="PaxDb" id="10090-ENSMUSP00000027495"/>
<dbReference type="PeptideAtlas" id="P42208"/>
<dbReference type="ProteomicsDB" id="256963"/>
<dbReference type="Pumba" id="P42208"/>
<dbReference type="DNASU" id="18000"/>
<dbReference type="Ensembl" id="ENSMUST00000027495.15">
    <property type="protein sequence ID" value="ENSMUSP00000027495.9"/>
    <property type="gene ID" value="ENSMUSG00000026276.21"/>
</dbReference>
<dbReference type="GeneID" id="18000"/>
<dbReference type="KEGG" id="mmu:18000"/>
<dbReference type="UCSC" id="uc007cea.2">
    <property type="organism name" value="mouse"/>
</dbReference>
<dbReference type="AGR" id="MGI:97298"/>
<dbReference type="CTD" id="4735"/>
<dbReference type="MGI" id="MGI:97298">
    <property type="gene designation" value="Septin2"/>
</dbReference>
<dbReference type="VEuPathDB" id="HostDB:ENSMUSG00000026276"/>
<dbReference type="VEuPathDB" id="HostDB:ENSMUSG00000116048"/>
<dbReference type="eggNOG" id="KOG2655">
    <property type="taxonomic scope" value="Eukaryota"/>
</dbReference>
<dbReference type="GeneTree" id="ENSGT00940000155098"/>
<dbReference type="HOGENOM" id="CLU_017718_0_0_1"/>
<dbReference type="InParanoid" id="P42208"/>
<dbReference type="OMA" id="AINCRDX"/>
<dbReference type="OrthoDB" id="416553at2759"/>
<dbReference type="PhylomeDB" id="P42208"/>
<dbReference type="TreeFam" id="TF101079"/>
<dbReference type="Reactome" id="R-MMU-5620912">
    <property type="pathway name" value="Anchoring of the basal body to the plasma membrane"/>
</dbReference>
<dbReference type="BioGRID-ORCS" id="18000">
    <property type="hits" value="1 hit in 49 CRISPR screens"/>
</dbReference>
<dbReference type="CD-CODE" id="01CA17F3">
    <property type="entry name" value="Centrosome"/>
</dbReference>
<dbReference type="CD-CODE" id="CE726F99">
    <property type="entry name" value="Postsynaptic density"/>
</dbReference>
<dbReference type="ChiTaRS" id="Sept2">
    <property type="organism name" value="mouse"/>
</dbReference>
<dbReference type="EvolutionaryTrace" id="P42208"/>
<dbReference type="PRO" id="PR:P42208"/>
<dbReference type="Proteomes" id="UP000000589">
    <property type="component" value="Chromosome 1"/>
</dbReference>
<dbReference type="RNAct" id="P42208">
    <property type="molecule type" value="protein"/>
</dbReference>
<dbReference type="Bgee" id="ENSMUSG00000026276">
    <property type="expression patterns" value="Expressed in yolk sac and 70 other cell types or tissues"/>
</dbReference>
<dbReference type="ExpressionAtlas" id="P42208">
    <property type="expression patterns" value="baseline and differential"/>
</dbReference>
<dbReference type="GO" id="GO:0015629">
    <property type="term" value="C:actin cytoskeleton"/>
    <property type="evidence" value="ECO:0000304"/>
    <property type="project" value="MGI"/>
</dbReference>
<dbReference type="GO" id="GO:0005826">
    <property type="term" value="C:actomyosin contractile ring"/>
    <property type="evidence" value="ECO:0000303"/>
    <property type="project" value="UniProtKB"/>
</dbReference>
<dbReference type="GO" id="GO:0005930">
    <property type="term" value="C:axoneme"/>
    <property type="evidence" value="ECO:0007669"/>
    <property type="project" value="Ensembl"/>
</dbReference>
<dbReference type="GO" id="GO:0005938">
    <property type="term" value="C:cell cortex"/>
    <property type="evidence" value="ECO:0000304"/>
    <property type="project" value="MGI"/>
</dbReference>
<dbReference type="GO" id="GO:0042995">
    <property type="term" value="C:cell projection"/>
    <property type="evidence" value="ECO:0000314"/>
    <property type="project" value="MGI"/>
</dbReference>
<dbReference type="GO" id="GO:0009986">
    <property type="term" value="C:cell surface"/>
    <property type="evidence" value="ECO:0000314"/>
    <property type="project" value="MGI"/>
</dbReference>
<dbReference type="GO" id="GO:0060170">
    <property type="term" value="C:ciliary membrane"/>
    <property type="evidence" value="ECO:0000314"/>
    <property type="project" value="UniProtKB"/>
</dbReference>
<dbReference type="GO" id="GO:0035869">
    <property type="term" value="C:ciliary transition zone"/>
    <property type="evidence" value="ECO:0000314"/>
    <property type="project" value="MGI"/>
</dbReference>
<dbReference type="GO" id="GO:0032154">
    <property type="term" value="C:cleavage furrow"/>
    <property type="evidence" value="ECO:0007669"/>
    <property type="project" value="UniProtKB-SubCell"/>
</dbReference>
<dbReference type="GO" id="GO:0005737">
    <property type="term" value="C:cytoplasm"/>
    <property type="evidence" value="ECO:0000250"/>
    <property type="project" value="UniProtKB"/>
</dbReference>
<dbReference type="GO" id="GO:0045171">
    <property type="term" value="C:intercellular bridge"/>
    <property type="evidence" value="ECO:0007669"/>
    <property type="project" value="Ensembl"/>
</dbReference>
<dbReference type="GO" id="GO:0000776">
    <property type="term" value="C:kinetochore"/>
    <property type="evidence" value="ECO:0007669"/>
    <property type="project" value="UniProtKB-KW"/>
</dbReference>
<dbReference type="GO" id="GO:0015630">
    <property type="term" value="C:microtubule cytoskeleton"/>
    <property type="evidence" value="ECO:0000304"/>
    <property type="project" value="MGI"/>
</dbReference>
<dbReference type="GO" id="GO:0030496">
    <property type="term" value="C:midbody"/>
    <property type="evidence" value="ECO:0000304"/>
    <property type="project" value="MGI"/>
</dbReference>
<dbReference type="GO" id="GO:0043209">
    <property type="term" value="C:myelin sheath"/>
    <property type="evidence" value="ECO:0007005"/>
    <property type="project" value="UniProtKB"/>
</dbReference>
<dbReference type="GO" id="GO:0005654">
    <property type="term" value="C:nucleoplasm"/>
    <property type="evidence" value="ECO:0007669"/>
    <property type="project" value="Ensembl"/>
</dbReference>
<dbReference type="GO" id="GO:0032391">
    <property type="term" value="C:photoreceptor connecting cilium"/>
    <property type="evidence" value="ECO:0007669"/>
    <property type="project" value="Ensembl"/>
</dbReference>
<dbReference type="GO" id="GO:0005886">
    <property type="term" value="C:plasma membrane"/>
    <property type="evidence" value="ECO:0000314"/>
    <property type="project" value="MGI"/>
</dbReference>
<dbReference type="GO" id="GO:0031105">
    <property type="term" value="C:septin complex"/>
    <property type="evidence" value="ECO:0000314"/>
    <property type="project" value="UniProtKB"/>
</dbReference>
<dbReference type="GO" id="GO:0097227">
    <property type="term" value="C:sperm annulus"/>
    <property type="evidence" value="ECO:0007669"/>
    <property type="project" value="Ensembl"/>
</dbReference>
<dbReference type="GO" id="GO:0005876">
    <property type="term" value="C:spindle microtubule"/>
    <property type="evidence" value="ECO:0000304"/>
    <property type="project" value="MGI"/>
</dbReference>
<dbReference type="GO" id="GO:0045202">
    <property type="term" value="C:synapse"/>
    <property type="evidence" value="ECO:0000314"/>
    <property type="project" value="MGI"/>
</dbReference>
<dbReference type="GO" id="GO:0030234">
    <property type="term" value="F:enzyme regulator activity"/>
    <property type="evidence" value="ECO:0000314"/>
    <property type="project" value="MGI"/>
</dbReference>
<dbReference type="GO" id="GO:0005525">
    <property type="term" value="F:GTP binding"/>
    <property type="evidence" value="ECO:0007669"/>
    <property type="project" value="UniProtKB-KW"/>
</dbReference>
<dbReference type="GO" id="GO:0003924">
    <property type="term" value="F:GTPase activity"/>
    <property type="evidence" value="ECO:0000303"/>
    <property type="project" value="UniProtKB"/>
</dbReference>
<dbReference type="GO" id="GO:0042802">
    <property type="term" value="F:identical protein binding"/>
    <property type="evidence" value="ECO:0000304"/>
    <property type="project" value="MGI"/>
</dbReference>
<dbReference type="GO" id="GO:0060090">
    <property type="term" value="F:molecular adaptor activity"/>
    <property type="evidence" value="ECO:0000304"/>
    <property type="project" value="MGI"/>
</dbReference>
<dbReference type="GO" id="GO:0030154">
    <property type="term" value="P:cell differentiation"/>
    <property type="evidence" value="ECO:0007669"/>
    <property type="project" value="UniProtKB-KW"/>
</dbReference>
<dbReference type="GO" id="GO:0060271">
    <property type="term" value="P:cilium assembly"/>
    <property type="evidence" value="ECO:0000315"/>
    <property type="project" value="UniProtKB"/>
</dbReference>
<dbReference type="GO" id="GO:0061640">
    <property type="term" value="P:cytoskeleton-dependent cytokinesis"/>
    <property type="evidence" value="ECO:0000303"/>
    <property type="project" value="UniProtKB"/>
</dbReference>
<dbReference type="GO" id="GO:0051258">
    <property type="term" value="P:protein polymerization"/>
    <property type="evidence" value="ECO:0000304"/>
    <property type="project" value="MGI"/>
</dbReference>
<dbReference type="GO" id="GO:0002036">
    <property type="term" value="P:regulation of L-glutamate import across plasma membrane"/>
    <property type="evidence" value="ECO:0000314"/>
    <property type="project" value="MGI"/>
</dbReference>
<dbReference type="GO" id="GO:0032880">
    <property type="term" value="P:regulation of protein localization"/>
    <property type="evidence" value="ECO:0000314"/>
    <property type="project" value="MGI"/>
</dbReference>
<dbReference type="GO" id="GO:0007224">
    <property type="term" value="P:smoothened signaling pathway"/>
    <property type="evidence" value="ECO:0000315"/>
    <property type="project" value="UniProtKB"/>
</dbReference>
<dbReference type="GO" id="GO:0007283">
    <property type="term" value="P:spermatogenesis"/>
    <property type="evidence" value="ECO:0007669"/>
    <property type="project" value="UniProtKB-KW"/>
</dbReference>
<dbReference type="CDD" id="cd01850">
    <property type="entry name" value="CDC_Septin"/>
    <property type="match status" value="1"/>
</dbReference>
<dbReference type="FunFam" id="3.40.50.300:FF:000064">
    <property type="entry name" value="Septin 4"/>
    <property type="match status" value="1"/>
</dbReference>
<dbReference type="Gene3D" id="3.40.50.300">
    <property type="entry name" value="P-loop containing nucleotide triphosphate hydrolases"/>
    <property type="match status" value="1"/>
</dbReference>
<dbReference type="InterPro" id="IPR030379">
    <property type="entry name" value="G_SEPTIN_dom"/>
</dbReference>
<dbReference type="InterPro" id="IPR027417">
    <property type="entry name" value="P-loop_NTPase"/>
</dbReference>
<dbReference type="InterPro" id="IPR016491">
    <property type="entry name" value="Septin"/>
</dbReference>
<dbReference type="InterPro" id="IPR008113">
    <property type="entry name" value="Septin2"/>
</dbReference>
<dbReference type="PANTHER" id="PTHR18884">
    <property type="entry name" value="SEPTIN"/>
    <property type="match status" value="1"/>
</dbReference>
<dbReference type="Pfam" id="PF00735">
    <property type="entry name" value="Septin"/>
    <property type="match status" value="1"/>
</dbReference>
<dbReference type="PIRSF" id="PIRSF006698">
    <property type="entry name" value="Septin"/>
    <property type="match status" value="1"/>
</dbReference>
<dbReference type="PRINTS" id="PR01740">
    <property type="entry name" value="SEPTIN2"/>
</dbReference>
<dbReference type="SUPFAM" id="SSF52540">
    <property type="entry name" value="P-loop containing nucleoside triphosphate hydrolases"/>
    <property type="match status" value="1"/>
</dbReference>
<dbReference type="PROSITE" id="PS51719">
    <property type="entry name" value="G_SEPTIN"/>
    <property type="match status" value="1"/>
</dbReference>
<comment type="function">
    <text evidence="1 2 6 7 8">Filament-forming cytoskeletal GTPase. Forms a filamentous structure with SEPTIN12, SEPTIN6, SEPTIN2 and probably SEPTIN4 at the sperm annulus which is required for the structural integrity and motility of the sperm tail during postmeiotic differentiation (By similarity). Required for normal organization of the actin cytoskeleton. Plays a role in the biogenesis of polarized columnar-shaped epithelium by maintaining polyglutamylated microtubules, thus facilitating efficient vesicle transport, and by impeding MAP4 binding to tubulin. Required for the progression through mitosis. Forms a scaffold at the midplane of the mitotic splindle required to maintain CENPE localization at kinetochores and consequently chromosome congression. During anaphase, may be required for chromosome segregation and spindle elongation. Plays a role in ciliogenesis and collective cell movements (By similarity). In cilia, required for the integrity of the diffusion barrier at the base of the primary cilium that prevents diffusion of transmembrane proteins between the cilia and plasma membranes: probably acts by regulating the assembly of the tectonic-like complex (also named B9 complex) by localizing TMEM231 protein.</text>
</comment>
<comment type="subunit">
    <text evidence="2 4">Septins polymerize into heterooligomeric protein complexes that form filaments, and associate with cellular membranes, actin filaments and microtubules (By similarity). GTPase activity is required for filament formation (By similarity). Septin filaments are assembled from asymmetrical heterotrimers, composed of SEPTIN2, SEPTIN6 and SEPTIN7 that associate head-to-head to form a hexameric unit (By similarity). Interaction between SEPTIN2 and SEPTIN7 seems indirect (By similarity). Also interacts with SEPTIN9 and SEPTIN5 (PubMed:11739749). Interaction with SEPTIN4 not detected (PubMed:11739749). Component of a septin core octameric complex consisting of SEPTIN12, SEPTIN7, SEPTIN6 and SEPTIN2 or SEPTIN4 in the order 12-7-6-2-2-6-7-12 or 12-7-6-4-4-6-7-12 and located in the sperm annulus (By similarity). Interacts with MAP4 (By similarity). Interacts with DZIP1L (By similarity).</text>
</comment>
<comment type="subcellular location">
    <subcellularLocation>
        <location>Cytoplasm</location>
    </subcellularLocation>
    <subcellularLocation>
        <location>Cytoplasm</location>
        <location>Cytoskeleton</location>
    </subcellularLocation>
    <subcellularLocation>
        <location evidence="1">Cytoplasm</location>
        <location evidence="1">Cytoskeleton</location>
        <location evidence="1">Spindle</location>
    </subcellularLocation>
    <subcellularLocation>
        <location evidence="1">Chromosome</location>
        <location evidence="1">Centromere</location>
        <location evidence="1">Kinetochore</location>
    </subcellularLocation>
    <subcellularLocation>
        <location evidence="1">Cleavage furrow</location>
    </subcellularLocation>
    <subcellularLocation>
        <location evidence="1">Midbody</location>
    </subcellularLocation>
    <subcellularLocation>
        <location evidence="1">Cytoplasm</location>
        <location evidence="1">Cell cortex</location>
    </subcellularLocation>
    <subcellularLocation>
        <location>Cell projection</location>
        <location>Cilium membrane</location>
    </subcellularLocation>
    <subcellularLocation>
        <location evidence="2">Cell projection</location>
        <location evidence="2">Cilium</location>
        <location evidence="2">Flagellum</location>
    </subcellularLocation>
    <text evidence="1 2">In metaphase cells, localized within the microtubule spindle. At the metaphase plate, in close apposition to the kinetochores of the congressed chromosomes. In cells undergoing cytokinesis, localized to the midbody, the ingressing cleavage furrow, and the central spindle (By similarity). In interphase and postmitotic cells, localized to fibrous or granular structures, depending on the growth state of the cell. Localizes at the base of the cilia near the morphological distinction between the cilia and plasma membranes. Found in the sperm annulus.</text>
</comment>
<comment type="tissue specificity">
    <text>Widely expressed.</text>
</comment>
<comment type="developmental stage">
    <text evidence="4">Expressed at 17 dpc in the brain with levels remaining relatively stable up to adulthood (at protein level).</text>
</comment>
<comment type="miscellaneous">
    <text evidence="1">Coordinated expression with SEPTIN6 and SEPTIN7.</text>
</comment>
<comment type="similarity">
    <text evidence="3">Belongs to the TRAFAC class TrmE-Era-EngA-EngB-Septin-like GTPase superfamily. Septin GTPase family.</text>
</comment>
<name>SEPT2_MOUSE</name>
<organism>
    <name type="scientific">Mus musculus</name>
    <name type="common">Mouse</name>
    <dbReference type="NCBI Taxonomy" id="10090"/>
    <lineage>
        <taxon>Eukaryota</taxon>
        <taxon>Metazoa</taxon>
        <taxon>Chordata</taxon>
        <taxon>Craniata</taxon>
        <taxon>Vertebrata</taxon>
        <taxon>Euteleostomi</taxon>
        <taxon>Mammalia</taxon>
        <taxon>Eutheria</taxon>
        <taxon>Euarchontoglires</taxon>
        <taxon>Glires</taxon>
        <taxon>Rodentia</taxon>
        <taxon>Myomorpha</taxon>
        <taxon>Muroidea</taxon>
        <taxon>Muridae</taxon>
        <taxon>Murinae</taxon>
        <taxon>Mus</taxon>
        <taxon>Mus</taxon>
    </lineage>
</organism>
<accession>P42208</accession>
<accession>B2RRZ2</accession>
<accession>Q3U9Y5</accession>
<proteinExistence type="evidence at protein level"/>
<gene>
    <name evidence="10" type="primary">Septin2</name>
    <name evidence="9" type="synonym">Nedd5</name>
    <name evidence="10" type="synonym">Sept2</name>
</gene>
<feature type="chain" id="PRO_0000173516" description="Septin-2">
    <location>
        <begin position="1"/>
        <end position="361"/>
    </location>
</feature>
<feature type="domain" description="Septin-type G" evidence="3">
    <location>
        <begin position="34"/>
        <end position="306"/>
    </location>
</feature>
<feature type="region of interest" description="G1 motif" evidence="3">
    <location>
        <begin position="44"/>
        <end position="51"/>
    </location>
</feature>
<feature type="region of interest" description="G3 motif" evidence="3">
    <location>
        <begin position="101"/>
        <end position="104"/>
    </location>
</feature>
<feature type="region of interest" description="G4 motif" evidence="3">
    <location>
        <begin position="182"/>
        <end position="185"/>
    </location>
</feature>
<feature type="region of interest" description="Important for dimerization" evidence="1">
    <location>
        <begin position="260"/>
        <end position="270"/>
    </location>
</feature>
<feature type="binding site">
    <location>
        <begin position="44"/>
        <end position="52"/>
    </location>
    <ligand>
        <name>GTP</name>
        <dbReference type="ChEBI" id="CHEBI:37565"/>
    </ligand>
</feature>
<feature type="binding site">
    <location>
        <position position="78"/>
    </location>
    <ligand>
        <name>GTP</name>
        <dbReference type="ChEBI" id="CHEBI:37565"/>
    </ligand>
</feature>
<feature type="binding site">
    <location>
        <position position="104"/>
    </location>
    <ligand>
        <name>GTP</name>
        <dbReference type="ChEBI" id="CHEBI:37565"/>
    </ligand>
</feature>
<feature type="binding site">
    <location>
        <begin position="183"/>
        <end position="186"/>
    </location>
    <ligand>
        <name>GTP</name>
        <dbReference type="ChEBI" id="CHEBI:37565"/>
    </ligand>
</feature>
<feature type="binding site" evidence="1">
    <location>
        <position position="241"/>
    </location>
    <ligand>
        <name>GTP</name>
        <dbReference type="ChEBI" id="CHEBI:37565"/>
    </ligand>
</feature>
<feature type="binding site">
    <location>
        <position position="256"/>
    </location>
    <ligand>
        <name>GTP</name>
        <dbReference type="ChEBI" id="CHEBI:37565"/>
    </ligand>
</feature>
<feature type="binding site" evidence="1">
    <location>
        <position position="258"/>
    </location>
    <ligand>
        <name>GTP</name>
        <dbReference type="ChEBI" id="CHEBI:37565"/>
    </ligand>
</feature>
<feature type="site" description="Important for dimerization" evidence="1">
    <location>
        <position position="156"/>
    </location>
</feature>
<feature type="modified residue" description="Phosphotyrosine" evidence="11">
    <location>
        <position position="17"/>
    </location>
</feature>
<feature type="modified residue" description="N6-acetyllysine" evidence="2">
    <location>
        <position position="190"/>
    </location>
</feature>
<feature type="modified residue" description="Phosphotyrosine" evidence="2">
    <location>
        <position position="211"/>
    </location>
</feature>
<feature type="modified residue" description="Phosphoserine" evidence="12 13 14 15 16 17">
    <location>
        <position position="218"/>
    </location>
</feature>
<feature type="mutagenesis site" description="Loss of GTP-binding." evidence="5">
    <original>S</original>
    <variation>D</variation>
    <location>
        <position position="46"/>
    </location>
</feature>
<feature type="mutagenesis site" description="Loss of GTP-binding activity." evidence="8">
    <original>G</original>
    <variation>V</variation>
    <location>
        <position position="47"/>
    </location>
</feature>
<feature type="mutagenesis site" description="Loss of GTP-binding activity." evidence="8">
    <original>S</original>
    <variation>N</variation>
    <location>
        <position position="51"/>
    </location>
</feature>
<feature type="mutagenesis site" description="Reduces affinity for GTP 20-fold." evidence="5">
    <original>T</original>
    <variation>G</variation>
    <location>
        <position position="78"/>
    </location>
</feature>
<feature type="mutagenesis site" description="Loss of GTP-binding activity." evidence="8">
    <original>Q</original>
    <variation>L</variation>
    <location>
        <position position="125"/>
    </location>
</feature>
<feature type="strand" evidence="18">
    <location>
        <begin position="35"/>
        <end position="45"/>
    </location>
</feature>
<feature type="helix" evidence="18">
    <location>
        <begin position="50"/>
        <end position="55"/>
    </location>
</feature>
<feature type="strand" evidence="18">
    <location>
        <begin position="59"/>
        <end position="61"/>
    </location>
</feature>
<feature type="strand" evidence="18">
    <location>
        <begin position="82"/>
        <end position="90"/>
    </location>
</feature>
<feature type="strand" evidence="18">
    <location>
        <begin position="93"/>
        <end position="101"/>
    </location>
</feature>
<feature type="strand" evidence="18">
    <location>
        <begin position="105"/>
        <end position="109"/>
    </location>
</feature>
<feature type="helix" evidence="18">
    <location>
        <begin position="111"/>
        <end position="133"/>
    </location>
</feature>
<feature type="strand" evidence="18">
    <location>
        <begin position="148"/>
        <end position="153"/>
    </location>
</feature>
<feature type="strand" evidence="18">
    <location>
        <begin position="157"/>
        <end position="160"/>
    </location>
</feature>
<feature type="helix" evidence="18">
    <location>
        <begin position="162"/>
        <end position="171"/>
    </location>
</feature>
<feature type="turn" evidence="18">
    <location>
        <begin position="172"/>
        <end position="174"/>
    </location>
</feature>
<feature type="strand" evidence="18">
    <location>
        <begin position="177"/>
        <end position="182"/>
    </location>
</feature>
<feature type="helix" evidence="18">
    <location>
        <begin position="184"/>
        <end position="186"/>
    </location>
</feature>
<feature type="helix" evidence="18">
    <location>
        <begin position="189"/>
        <end position="205"/>
    </location>
</feature>
<feature type="helix" evidence="18">
    <location>
        <begin position="222"/>
        <end position="233"/>
    </location>
</feature>
<feature type="strand" evidence="18">
    <location>
        <begin position="236"/>
        <end position="238"/>
    </location>
</feature>
<feature type="strand" evidence="18">
    <location>
        <begin position="245"/>
        <end position="247"/>
    </location>
</feature>
<feature type="strand" evidence="18">
    <location>
        <begin position="249"/>
        <end position="258"/>
    </location>
</feature>
<feature type="strand" evidence="18">
    <location>
        <begin position="261"/>
        <end position="264"/>
    </location>
</feature>
<feature type="turn" evidence="18">
    <location>
        <begin position="268"/>
        <end position="270"/>
    </location>
</feature>
<feature type="helix" evidence="18">
    <location>
        <begin position="273"/>
        <end position="293"/>
    </location>
</feature>
<feature type="helix" evidence="18">
    <location>
        <begin position="295"/>
        <end position="303"/>
    </location>
</feature>
<reference key="1">
    <citation type="journal article" date="1997" name="Genes Dev.">
        <title>Nedd5, a mammalian septin, is a novel cytoskeletal component interacting with actin-based structures.</title>
        <authorList>
            <person name="Kinoshita M."/>
            <person name="Kumar S."/>
            <person name="Noda M."/>
        </authorList>
    </citation>
    <scope>NUCLEOTIDE SEQUENCE [MRNA]</scope>
    <scope>FUNCTION</scope>
    <scope>MUTAGENESIS OF GLY-47; SER-51 AND GLN-125</scope>
    <source>
        <tissue>Neural tube</tissue>
    </source>
</reference>
<reference key="2">
    <citation type="journal article" date="2005" name="Science">
        <title>The transcriptional landscape of the mammalian genome.</title>
        <authorList>
            <person name="Carninci P."/>
            <person name="Kasukawa T."/>
            <person name="Katayama S."/>
            <person name="Gough J."/>
            <person name="Frith M.C."/>
            <person name="Maeda N."/>
            <person name="Oyama R."/>
            <person name="Ravasi T."/>
            <person name="Lenhard B."/>
            <person name="Wells C."/>
            <person name="Kodzius R."/>
            <person name="Shimokawa K."/>
            <person name="Bajic V.B."/>
            <person name="Brenner S.E."/>
            <person name="Batalov S."/>
            <person name="Forrest A.R."/>
            <person name="Zavolan M."/>
            <person name="Davis M.J."/>
            <person name="Wilming L.G."/>
            <person name="Aidinis V."/>
            <person name="Allen J.E."/>
            <person name="Ambesi-Impiombato A."/>
            <person name="Apweiler R."/>
            <person name="Aturaliya R.N."/>
            <person name="Bailey T.L."/>
            <person name="Bansal M."/>
            <person name="Baxter L."/>
            <person name="Beisel K.W."/>
            <person name="Bersano T."/>
            <person name="Bono H."/>
            <person name="Chalk A.M."/>
            <person name="Chiu K.P."/>
            <person name="Choudhary V."/>
            <person name="Christoffels A."/>
            <person name="Clutterbuck D.R."/>
            <person name="Crowe M.L."/>
            <person name="Dalla E."/>
            <person name="Dalrymple B.P."/>
            <person name="de Bono B."/>
            <person name="Della Gatta G."/>
            <person name="di Bernardo D."/>
            <person name="Down T."/>
            <person name="Engstrom P."/>
            <person name="Fagiolini M."/>
            <person name="Faulkner G."/>
            <person name="Fletcher C.F."/>
            <person name="Fukushima T."/>
            <person name="Furuno M."/>
            <person name="Futaki S."/>
            <person name="Gariboldi M."/>
            <person name="Georgii-Hemming P."/>
            <person name="Gingeras T.R."/>
            <person name="Gojobori T."/>
            <person name="Green R.E."/>
            <person name="Gustincich S."/>
            <person name="Harbers M."/>
            <person name="Hayashi Y."/>
            <person name="Hensch T.K."/>
            <person name="Hirokawa N."/>
            <person name="Hill D."/>
            <person name="Huminiecki L."/>
            <person name="Iacono M."/>
            <person name="Ikeo K."/>
            <person name="Iwama A."/>
            <person name="Ishikawa T."/>
            <person name="Jakt M."/>
            <person name="Kanapin A."/>
            <person name="Katoh M."/>
            <person name="Kawasawa Y."/>
            <person name="Kelso J."/>
            <person name="Kitamura H."/>
            <person name="Kitano H."/>
            <person name="Kollias G."/>
            <person name="Krishnan S.P."/>
            <person name="Kruger A."/>
            <person name="Kummerfeld S.K."/>
            <person name="Kurochkin I.V."/>
            <person name="Lareau L.F."/>
            <person name="Lazarevic D."/>
            <person name="Lipovich L."/>
            <person name="Liu J."/>
            <person name="Liuni S."/>
            <person name="McWilliam S."/>
            <person name="Madan Babu M."/>
            <person name="Madera M."/>
            <person name="Marchionni L."/>
            <person name="Matsuda H."/>
            <person name="Matsuzawa S."/>
            <person name="Miki H."/>
            <person name="Mignone F."/>
            <person name="Miyake S."/>
            <person name="Morris K."/>
            <person name="Mottagui-Tabar S."/>
            <person name="Mulder N."/>
            <person name="Nakano N."/>
            <person name="Nakauchi H."/>
            <person name="Ng P."/>
            <person name="Nilsson R."/>
            <person name="Nishiguchi S."/>
            <person name="Nishikawa S."/>
            <person name="Nori F."/>
            <person name="Ohara O."/>
            <person name="Okazaki Y."/>
            <person name="Orlando V."/>
            <person name="Pang K.C."/>
            <person name="Pavan W.J."/>
            <person name="Pavesi G."/>
            <person name="Pesole G."/>
            <person name="Petrovsky N."/>
            <person name="Piazza S."/>
            <person name="Reed J."/>
            <person name="Reid J.F."/>
            <person name="Ring B.Z."/>
            <person name="Ringwald M."/>
            <person name="Rost B."/>
            <person name="Ruan Y."/>
            <person name="Salzberg S.L."/>
            <person name="Sandelin A."/>
            <person name="Schneider C."/>
            <person name="Schoenbach C."/>
            <person name="Sekiguchi K."/>
            <person name="Semple C.A."/>
            <person name="Seno S."/>
            <person name="Sessa L."/>
            <person name="Sheng Y."/>
            <person name="Shibata Y."/>
            <person name="Shimada H."/>
            <person name="Shimada K."/>
            <person name="Silva D."/>
            <person name="Sinclair B."/>
            <person name="Sperling S."/>
            <person name="Stupka E."/>
            <person name="Sugiura K."/>
            <person name="Sultana R."/>
            <person name="Takenaka Y."/>
            <person name="Taki K."/>
            <person name="Tammoja K."/>
            <person name="Tan S.L."/>
            <person name="Tang S."/>
            <person name="Taylor M.S."/>
            <person name="Tegner J."/>
            <person name="Teichmann S.A."/>
            <person name="Ueda H.R."/>
            <person name="van Nimwegen E."/>
            <person name="Verardo R."/>
            <person name="Wei C.L."/>
            <person name="Yagi K."/>
            <person name="Yamanishi H."/>
            <person name="Zabarovsky E."/>
            <person name="Zhu S."/>
            <person name="Zimmer A."/>
            <person name="Hide W."/>
            <person name="Bult C."/>
            <person name="Grimmond S.M."/>
            <person name="Teasdale R.D."/>
            <person name="Liu E.T."/>
            <person name="Brusic V."/>
            <person name="Quackenbush J."/>
            <person name="Wahlestedt C."/>
            <person name="Mattick J.S."/>
            <person name="Hume D.A."/>
            <person name="Kai C."/>
            <person name="Sasaki D."/>
            <person name="Tomaru Y."/>
            <person name="Fukuda S."/>
            <person name="Kanamori-Katayama M."/>
            <person name="Suzuki M."/>
            <person name="Aoki J."/>
            <person name="Arakawa T."/>
            <person name="Iida J."/>
            <person name="Imamura K."/>
            <person name="Itoh M."/>
            <person name="Kato T."/>
            <person name="Kawaji H."/>
            <person name="Kawagashira N."/>
            <person name="Kawashima T."/>
            <person name="Kojima M."/>
            <person name="Kondo S."/>
            <person name="Konno H."/>
            <person name="Nakano K."/>
            <person name="Ninomiya N."/>
            <person name="Nishio T."/>
            <person name="Okada M."/>
            <person name="Plessy C."/>
            <person name="Shibata K."/>
            <person name="Shiraki T."/>
            <person name="Suzuki S."/>
            <person name="Tagami M."/>
            <person name="Waki K."/>
            <person name="Watahiki A."/>
            <person name="Okamura-Oho Y."/>
            <person name="Suzuki H."/>
            <person name="Kawai J."/>
            <person name="Hayashizaki Y."/>
        </authorList>
    </citation>
    <scope>NUCLEOTIDE SEQUENCE [LARGE SCALE MRNA]</scope>
    <source>
        <strain>C57BL/6J</strain>
        <tissue>Bone marrow</tissue>
        <tissue>Placenta</tissue>
    </source>
</reference>
<reference key="3">
    <citation type="submission" date="2005-09" db="EMBL/GenBank/DDBJ databases">
        <authorList>
            <person name="Mural R.J."/>
            <person name="Adams M.D."/>
            <person name="Myers E.W."/>
            <person name="Smith H.O."/>
            <person name="Venter J.C."/>
        </authorList>
    </citation>
    <scope>NUCLEOTIDE SEQUENCE [LARGE SCALE GENOMIC DNA]</scope>
</reference>
<reference key="4">
    <citation type="journal article" date="2004" name="Genome Res.">
        <title>The status, quality, and expansion of the NIH full-length cDNA project: the Mammalian Gene Collection (MGC).</title>
        <authorList>
            <consortium name="The MGC Project Team"/>
        </authorList>
    </citation>
    <scope>NUCLEOTIDE SEQUENCE [LARGE SCALE MRNA]</scope>
    <source>
        <tissue>Brain</tissue>
    </source>
</reference>
<reference key="5">
    <citation type="submission" date="2007-07" db="UniProtKB">
        <authorList>
            <person name="Lubec G."/>
            <person name="Klug S."/>
            <person name="Yang J.W."/>
            <person name="Zigmond M."/>
        </authorList>
    </citation>
    <scope>PROTEIN SEQUENCE OF 51-66; 97-112 AND 117-128</scope>
    <scope>IDENTIFICATION BY MASS SPECTROMETRY</scope>
    <source>
        <tissue>Brain</tissue>
        <tissue>Hippocampus</tissue>
    </source>
</reference>
<reference key="6">
    <citation type="journal article" date="2002" name="Mol. Cell. Biol.">
        <title>The septin CDCrel-1 is dispensable for normal development and neurotransmitter release.</title>
        <authorList>
            <person name="Peng X.-R."/>
            <person name="Jia Z."/>
            <person name="Zhang Y."/>
            <person name="Ware J."/>
            <person name="Trimble W.S."/>
        </authorList>
    </citation>
    <scope>INTERACTION WITH SEPTIN5 AND SEPTIN7</scope>
    <scope>LACK OF INTERACTION WITH SEPTIN4</scope>
    <scope>DEVELOPMENTAL STAGE</scope>
</reference>
<reference key="7">
    <citation type="journal article" date="2005" name="Nat. Biotechnol.">
        <title>Immunoaffinity profiling of tyrosine phosphorylation in cancer cells.</title>
        <authorList>
            <person name="Rush J."/>
            <person name="Moritz A."/>
            <person name="Lee K.A."/>
            <person name="Guo A."/>
            <person name="Goss V.L."/>
            <person name="Spek E.J."/>
            <person name="Zhang H."/>
            <person name="Zha X.-M."/>
            <person name="Polakiewicz R.D."/>
            <person name="Comb M.J."/>
        </authorList>
    </citation>
    <scope>PHOSPHORYLATION [LARGE SCALE ANALYSIS] AT TYR-17</scope>
    <scope>IDENTIFICATION BY MASS SPECTROMETRY [LARGE SCALE ANALYSIS]</scope>
</reference>
<reference key="8">
    <citation type="journal article" date="2006" name="Mol. Cell. Proteomics">
        <title>Comprehensive identification of phosphorylation sites in postsynaptic density preparations.</title>
        <authorList>
            <person name="Trinidad J.C."/>
            <person name="Specht C.G."/>
            <person name="Thalhammer A."/>
            <person name="Schoepfer R."/>
            <person name="Burlingame A.L."/>
        </authorList>
    </citation>
    <scope>PHOSPHORYLATION [LARGE SCALE ANALYSIS] AT SER-218</scope>
    <scope>IDENTIFICATION BY MASS SPECTROMETRY [LARGE SCALE ANALYSIS]</scope>
    <source>
        <tissue>Brain</tissue>
    </source>
</reference>
<reference key="9">
    <citation type="journal article" date="2007" name="Proc. Natl. Acad. Sci. U.S.A.">
        <title>Large-scale phosphorylation analysis of mouse liver.</title>
        <authorList>
            <person name="Villen J."/>
            <person name="Beausoleil S.A."/>
            <person name="Gerber S.A."/>
            <person name="Gygi S.P."/>
        </authorList>
    </citation>
    <scope>PHOSPHORYLATION [LARGE SCALE ANALYSIS] AT SER-218</scope>
    <scope>IDENTIFICATION BY MASS SPECTROMETRY [LARGE SCALE ANALYSIS]</scope>
    <source>
        <tissue>Liver</tissue>
    </source>
</reference>
<reference key="10">
    <citation type="journal article" date="2008" name="J. Proteome Res.">
        <title>Specific phosphopeptide enrichment with immobilized titanium ion affinity chromatography adsorbent for phosphoproteome analysis.</title>
        <authorList>
            <person name="Zhou H."/>
            <person name="Ye M."/>
            <person name="Dong J."/>
            <person name="Han G."/>
            <person name="Jiang X."/>
            <person name="Wu R."/>
            <person name="Zou H."/>
        </authorList>
    </citation>
    <scope>PHOSPHORYLATION [LARGE SCALE ANALYSIS] AT SER-218</scope>
    <scope>IDENTIFICATION BY MASS SPECTROMETRY [LARGE SCALE ANALYSIS]</scope>
    <source>
        <tissue>Liver</tissue>
    </source>
</reference>
<reference key="11">
    <citation type="journal article" date="2009" name="Immunity">
        <title>The phagosomal proteome in interferon-gamma-activated macrophages.</title>
        <authorList>
            <person name="Trost M."/>
            <person name="English L."/>
            <person name="Lemieux S."/>
            <person name="Courcelles M."/>
            <person name="Desjardins M."/>
            <person name="Thibault P."/>
        </authorList>
    </citation>
    <scope>PHOSPHORYLATION [LARGE SCALE ANALYSIS] AT SER-218</scope>
    <scope>IDENTIFICATION BY MASS SPECTROMETRY [LARGE SCALE ANALYSIS]</scope>
</reference>
<reference key="12">
    <citation type="journal article" date="2009" name="Mol. Cell. Proteomics">
        <title>Large scale localization of protein phosphorylation by use of electron capture dissociation mass spectrometry.</title>
        <authorList>
            <person name="Sweet S.M."/>
            <person name="Bailey C.M."/>
            <person name="Cunningham D.L."/>
            <person name="Heath J.K."/>
            <person name="Cooper H.J."/>
        </authorList>
    </citation>
    <scope>PHOSPHORYLATION [LARGE SCALE ANALYSIS] AT SER-218</scope>
    <scope>IDENTIFICATION BY MASS SPECTROMETRY [LARGE SCALE ANALYSIS]</scope>
    <source>
        <tissue>Embryonic fibroblast</tissue>
    </source>
</reference>
<reference key="13">
    <citation type="journal article" date="2010" name="Cell">
        <title>A tissue-specific atlas of mouse protein phosphorylation and expression.</title>
        <authorList>
            <person name="Huttlin E.L."/>
            <person name="Jedrychowski M.P."/>
            <person name="Elias J.E."/>
            <person name="Goswami T."/>
            <person name="Rad R."/>
            <person name="Beausoleil S.A."/>
            <person name="Villen J."/>
            <person name="Haas W."/>
            <person name="Sowa M.E."/>
            <person name="Gygi S.P."/>
        </authorList>
    </citation>
    <scope>PHOSPHORYLATION [LARGE SCALE ANALYSIS] AT SER-218</scope>
    <scope>IDENTIFICATION BY MASS SPECTROMETRY [LARGE SCALE ANALYSIS]</scope>
    <source>
        <tissue>Brain</tissue>
        <tissue>Brown adipose tissue</tissue>
        <tissue>Heart</tissue>
        <tissue>Kidney</tissue>
        <tissue>Liver</tissue>
        <tissue>Lung</tissue>
        <tissue>Pancreas</tissue>
        <tissue>Spleen</tissue>
        <tissue>Testis</tissue>
    </source>
</reference>
<reference key="14">
    <citation type="journal article" date="2010" name="Science">
        <title>A septin diffusion barrier at the base of the primary cilium maintains ciliary membrane protein distribution.</title>
        <authorList>
            <person name="Hu Q."/>
            <person name="Milenkovic L."/>
            <person name="Jin H."/>
            <person name="Scott M.P."/>
            <person name="Nachury M.V."/>
            <person name="Spiliotis E.T."/>
            <person name="Nelson W.J."/>
        </authorList>
    </citation>
    <scope>FUNCTION</scope>
    <scope>SUBCELLULAR LOCATION</scope>
</reference>
<reference key="15">
    <citation type="journal article" date="2012" name="Nat. Cell Biol.">
        <title>A ciliopathy complex at the transition zone protects the cilia as a privileged membrane domain.</title>
        <authorList>
            <person name="Chih B."/>
            <person name="Liu P."/>
            <person name="Chinn Y."/>
            <person name="Chalouni C."/>
            <person name="Komuves L.G."/>
            <person name="Hass P.E."/>
            <person name="Sandoval W."/>
            <person name="Peterson A.S."/>
        </authorList>
    </citation>
    <scope>FUNCTION</scope>
    <scope>SUBCELLULAR LOCATION</scope>
</reference>
<reference key="16">
    <citation type="journal article" date="2009" name="Proc. Natl. Acad. Sci. U.S.A.">
        <title>GTP-induced conformational changes in septins and implications for function.</title>
        <authorList>
            <person name="Sirajuddin M."/>
            <person name="Farkasovsky M."/>
            <person name="Zent E."/>
            <person name="Wittinghofer A."/>
        </authorList>
    </citation>
    <scope>X-RAY CRYSTALLOGRAPHY (2.9 ANGSTROMS) OF 33-306 IN COMPLEX WITH GPPNHP</scope>
    <scope>MUTAGENESIS OF SER-46 AND THR-78</scope>
</reference>